<comment type="subcellular location">
    <subcellularLocation>
        <location evidence="2">Membrane</location>
        <topology evidence="2">Single-pass membrane protein</topology>
    </subcellularLocation>
</comment>
<comment type="similarity">
    <text evidence="2">Belongs to the DinQ family.</text>
</comment>
<comment type="sequence caution" evidence="2">
    <conflict type="erroneous initiation">
        <sequence resource="EMBL-CDS" id="AAN82736"/>
    </conflict>
</comment>
<name>DINQ_ECOL6</name>
<keyword id="KW-0472">Membrane</keyword>
<keyword id="KW-1185">Reference proteome</keyword>
<keyword id="KW-0812">Transmembrane</keyword>
<keyword id="KW-1133">Transmembrane helix</keyword>
<sequence>MSKRMHSHSIAWRKRVIDKAIIVLGALIALLELIRFLLQLLN</sequence>
<evidence type="ECO:0000255" key="1"/>
<evidence type="ECO:0000305" key="2"/>
<gene>
    <name type="primary">dinQ</name>
    <name type="ordered locus">c4300</name>
</gene>
<proteinExistence type="inferred from homology"/>
<reference key="1">
    <citation type="journal article" date="2002" name="Proc. Natl. Acad. Sci. U.S.A.">
        <title>Extensive mosaic structure revealed by the complete genome sequence of uropathogenic Escherichia coli.</title>
        <authorList>
            <person name="Welch R.A."/>
            <person name="Burland V."/>
            <person name="Plunkett G. III"/>
            <person name="Redford P."/>
            <person name="Roesch P."/>
            <person name="Rasko D."/>
            <person name="Buckles E.L."/>
            <person name="Liou S.-R."/>
            <person name="Boutin A."/>
            <person name="Hackett J."/>
            <person name="Stroud D."/>
            <person name="Mayhew G.F."/>
            <person name="Rose D.J."/>
            <person name="Zhou S."/>
            <person name="Schwartz D.C."/>
            <person name="Perna N.T."/>
            <person name="Mobley H.L.T."/>
            <person name="Donnenberg M.S."/>
            <person name="Blattner F.R."/>
        </authorList>
    </citation>
    <scope>NUCLEOTIDE SEQUENCE [LARGE SCALE GENOMIC DNA]</scope>
    <source>
        <strain>CFT073 / ATCC 700928 / UPEC</strain>
    </source>
</reference>
<feature type="chain" id="PRO_0000311855" description="Uncharacterized protein DinQ">
    <location>
        <begin position="1"/>
        <end position="42"/>
    </location>
</feature>
<feature type="transmembrane region" description="Helical" evidence="1">
    <location>
        <begin position="21"/>
        <end position="41"/>
    </location>
</feature>
<protein>
    <recommendedName>
        <fullName>Uncharacterized protein DinQ</fullName>
    </recommendedName>
</protein>
<accession>Q8FCK7</accession>
<organism>
    <name type="scientific">Escherichia coli O6:H1 (strain CFT073 / ATCC 700928 / UPEC)</name>
    <dbReference type="NCBI Taxonomy" id="199310"/>
    <lineage>
        <taxon>Bacteria</taxon>
        <taxon>Pseudomonadati</taxon>
        <taxon>Pseudomonadota</taxon>
        <taxon>Gammaproteobacteria</taxon>
        <taxon>Enterobacterales</taxon>
        <taxon>Enterobacteriaceae</taxon>
        <taxon>Escherichia</taxon>
    </lineage>
</organism>
<dbReference type="EMBL" id="AE014075">
    <property type="protein sequence ID" value="AAN82736.1"/>
    <property type="status" value="ALT_INIT"/>
    <property type="molecule type" value="Genomic_DNA"/>
</dbReference>
<dbReference type="SMR" id="Q8FCK7"/>
<dbReference type="KEGG" id="ecc:c4300"/>
<dbReference type="eggNOG" id="ENOG5031KX7">
    <property type="taxonomic scope" value="Bacteria"/>
</dbReference>
<dbReference type="HOGENOM" id="CLU_3250642_0_0_6"/>
<dbReference type="Proteomes" id="UP000001410">
    <property type="component" value="Chromosome"/>
</dbReference>
<dbReference type="GO" id="GO:0016020">
    <property type="term" value="C:membrane"/>
    <property type="evidence" value="ECO:0007669"/>
    <property type="project" value="UniProtKB-SubCell"/>
</dbReference>
<dbReference type="InterPro" id="IPR048189">
    <property type="entry name" value="DinQ-like"/>
</dbReference>
<dbReference type="NCBIfam" id="NF041472">
    <property type="entry name" value="toxin_DinQ"/>
    <property type="match status" value="1"/>
</dbReference>